<proteinExistence type="inferred from homology"/>
<organism>
    <name type="scientific">Geotalea uraniireducens (strain Rf4)</name>
    <name type="common">Geobacter uraniireducens</name>
    <dbReference type="NCBI Taxonomy" id="351605"/>
    <lineage>
        <taxon>Bacteria</taxon>
        <taxon>Pseudomonadati</taxon>
        <taxon>Thermodesulfobacteriota</taxon>
        <taxon>Desulfuromonadia</taxon>
        <taxon>Geobacterales</taxon>
        <taxon>Geobacteraceae</taxon>
        <taxon>Geotalea</taxon>
    </lineage>
</organism>
<evidence type="ECO:0000255" key="1">
    <source>
        <dbReference type="HAMAP-Rule" id="MF_00131"/>
    </source>
</evidence>
<sequence length="267" mass="28353">MSRIATTFANLAKQNEKALVTFITAGDPDLETTEKLILELEKSGADLIELGVPFSDPMADGPTIQLSSERALCAGTTLPKILTLVKSVRQQTEIPLILMGYYNPVFLYGIERFVADAVSAGVDGVLLVDLPPEEAEEFKAAADREGLDVIFLLTPTSDEARIRKVANLGSGFIYYVSVTGVTGARTSVADTVFPDVKKIREHVTLPLVVGFGISDPVQAGRVAAVADGVVVGSALVKLFEEFRGDELRERLGGFVAALKAGVKAVGG</sequence>
<protein>
    <recommendedName>
        <fullName evidence="1">Tryptophan synthase alpha chain</fullName>
        <ecNumber evidence="1">4.2.1.20</ecNumber>
    </recommendedName>
</protein>
<gene>
    <name evidence="1" type="primary">trpA</name>
    <name type="ordered locus">Gura_3280</name>
</gene>
<accession>A5G6M1</accession>
<name>TRPA_GEOUR</name>
<keyword id="KW-0028">Amino-acid biosynthesis</keyword>
<keyword id="KW-0057">Aromatic amino acid biosynthesis</keyword>
<keyword id="KW-0456">Lyase</keyword>
<keyword id="KW-1185">Reference proteome</keyword>
<keyword id="KW-0822">Tryptophan biosynthesis</keyword>
<feature type="chain" id="PRO_1000076356" description="Tryptophan synthase alpha chain">
    <location>
        <begin position="1"/>
        <end position="267"/>
    </location>
</feature>
<feature type="active site" description="Proton acceptor" evidence="1">
    <location>
        <position position="49"/>
    </location>
</feature>
<feature type="active site" description="Proton acceptor" evidence="1">
    <location>
        <position position="60"/>
    </location>
</feature>
<comment type="function">
    <text evidence="1">The alpha subunit is responsible for the aldol cleavage of indoleglycerol phosphate to indole and glyceraldehyde 3-phosphate.</text>
</comment>
<comment type="catalytic activity">
    <reaction evidence="1">
        <text>(1S,2R)-1-C-(indol-3-yl)glycerol 3-phosphate + L-serine = D-glyceraldehyde 3-phosphate + L-tryptophan + H2O</text>
        <dbReference type="Rhea" id="RHEA:10532"/>
        <dbReference type="ChEBI" id="CHEBI:15377"/>
        <dbReference type="ChEBI" id="CHEBI:33384"/>
        <dbReference type="ChEBI" id="CHEBI:57912"/>
        <dbReference type="ChEBI" id="CHEBI:58866"/>
        <dbReference type="ChEBI" id="CHEBI:59776"/>
        <dbReference type="EC" id="4.2.1.20"/>
    </reaction>
</comment>
<comment type="pathway">
    <text evidence="1">Amino-acid biosynthesis; L-tryptophan biosynthesis; L-tryptophan from chorismate: step 5/5.</text>
</comment>
<comment type="subunit">
    <text evidence="1">Tetramer of two alpha and two beta chains.</text>
</comment>
<comment type="similarity">
    <text evidence="1">Belongs to the TrpA family.</text>
</comment>
<dbReference type="EC" id="4.2.1.20" evidence="1"/>
<dbReference type="EMBL" id="CP000698">
    <property type="protein sequence ID" value="ABQ27439.1"/>
    <property type="molecule type" value="Genomic_DNA"/>
</dbReference>
<dbReference type="RefSeq" id="WP_011940102.1">
    <property type="nucleotide sequence ID" value="NC_009483.1"/>
</dbReference>
<dbReference type="SMR" id="A5G6M1"/>
<dbReference type="STRING" id="351605.Gura_3280"/>
<dbReference type="KEGG" id="gur:Gura_3280"/>
<dbReference type="HOGENOM" id="CLU_016734_0_0_7"/>
<dbReference type="OrthoDB" id="9804578at2"/>
<dbReference type="UniPathway" id="UPA00035">
    <property type="reaction ID" value="UER00044"/>
</dbReference>
<dbReference type="Proteomes" id="UP000006695">
    <property type="component" value="Chromosome"/>
</dbReference>
<dbReference type="GO" id="GO:0005829">
    <property type="term" value="C:cytosol"/>
    <property type="evidence" value="ECO:0007669"/>
    <property type="project" value="TreeGrafter"/>
</dbReference>
<dbReference type="GO" id="GO:0004834">
    <property type="term" value="F:tryptophan synthase activity"/>
    <property type="evidence" value="ECO:0007669"/>
    <property type="project" value="UniProtKB-UniRule"/>
</dbReference>
<dbReference type="CDD" id="cd04724">
    <property type="entry name" value="Tryptophan_synthase_alpha"/>
    <property type="match status" value="1"/>
</dbReference>
<dbReference type="FunFam" id="3.20.20.70:FF:000037">
    <property type="entry name" value="Tryptophan synthase alpha chain"/>
    <property type="match status" value="1"/>
</dbReference>
<dbReference type="Gene3D" id="3.20.20.70">
    <property type="entry name" value="Aldolase class I"/>
    <property type="match status" value="1"/>
</dbReference>
<dbReference type="HAMAP" id="MF_00131">
    <property type="entry name" value="Trp_synth_alpha"/>
    <property type="match status" value="1"/>
</dbReference>
<dbReference type="InterPro" id="IPR013785">
    <property type="entry name" value="Aldolase_TIM"/>
</dbReference>
<dbReference type="InterPro" id="IPR011060">
    <property type="entry name" value="RibuloseP-bd_barrel"/>
</dbReference>
<dbReference type="InterPro" id="IPR018204">
    <property type="entry name" value="Trp_synthase_alpha_AS"/>
</dbReference>
<dbReference type="InterPro" id="IPR002028">
    <property type="entry name" value="Trp_synthase_suA"/>
</dbReference>
<dbReference type="NCBIfam" id="TIGR00262">
    <property type="entry name" value="trpA"/>
    <property type="match status" value="1"/>
</dbReference>
<dbReference type="PANTHER" id="PTHR43406:SF1">
    <property type="entry name" value="TRYPTOPHAN SYNTHASE ALPHA CHAIN, CHLOROPLASTIC"/>
    <property type="match status" value="1"/>
</dbReference>
<dbReference type="PANTHER" id="PTHR43406">
    <property type="entry name" value="TRYPTOPHAN SYNTHASE, ALPHA CHAIN"/>
    <property type="match status" value="1"/>
</dbReference>
<dbReference type="Pfam" id="PF00290">
    <property type="entry name" value="Trp_syntA"/>
    <property type="match status" value="1"/>
</dbReference>
<dbReference type="SUPFAM" id="SSF51366">
    <property type="entry name" value="Ribulose-phoshate binding barrel"/>
    <property type="match status" value="1"/>
</dbReference>
<dbReference type="PROSITE" id="PS00167">
    <property type="entry name" value="TRP_SYNTHASE_ALPHA"/>
    <property type="match status" value="1"/>
</dbReference>
<reference key="1">
    <citation type="submission" date="2007-05" db="EMBL/GenBank/DDBJ databases">
        <title>Complete sequence of Geobacter uraniireducens Rf4.</title>
        <authorList>
            <consortium name="US DOE Joint Genome Institute"/>
            <person name="Copeland A."/>
            <person name="Lucas S."/>
            <person name="Lapidus A."/>
            <person name="Barry K."/>
            <person name="Detter J.C."/>
            <person name="Glavina del Rio T."/>
            <person name="Hammon N."/>
            <person name="Israni S."/>
            <person name="Dalin E."/>
            <person name="Tice H."/>
            <person name="Pitluck S."/>
            <person name="Chertkov O."/>
            <person name="Brettin T."/>
            <person name="Bruce D."/>
            <person name="Han C."/>
            <person name="Schmutz J."/>
            <person name="Larimer F."/>
            <person name="Land M."/>
            <person name="Hauser L."/>
            <person name="Kyrpides N."/>
            <person name="Mikhailova N."/>
            <person name="Shelobolina E."/>
            <person name="Aklujkar M."/>
            <person name="Lovley D."/>
            <person name="Richardson P."/>
        </authorList>
    </citation>
    <scope>NUCLEOTIDE SEQUENCE [LARGE SCALE GENOMIC DNA]</scope>
    <source>
        <strain>ATCC BAA-1134 / JCM 13001 / Rf4</strain>
    </source>
</reference>